<evidence type="ECO:0000255" key="1">
    <source>
        <dbReference type="PROSITE-ProRule" id="PRU00648"/>
    </source>
</evidence>
<evidence type="ECO:0000255" key="2">
    <source>
        <dbReference type="PROSITE-ProRule" id="PRU00705"/>
    </source>
</evidence>
<evidence type="ECO:0000269" key="3">
    <source>
    </source>
</evidence>
<protein>
    <recommendedName>
        <fullName>Iron oxidase</fullName>
        <ecNumber>1.16.3.-</ecNumber>
    </recommendedName>
    <alternativeName>
        <fullName>Fe(II) oxidase</fullName>
    </alternativeName>
</protein>
<proteinExistence type="evidence at protein level"/>
<sequence>MSEKDKMITRRDALRNIAVVVGSVATTTMMGVGVADAGSMPKAAVQYQDTPKGKDHCSVCAQFIAPHSCKVVAGNISPNGWCVAFVPKSA</sequence>
<feature type="signal peptide" description="Tat-type signal" evidence="1 3">
    <location>
        <begin position="1"/>
        <end position="37"/>
    </location>
</feature>
<feature type="chain" id="PRO_0000013440" description="Iron oxidase">
    <location>
        <begin position="38"/>
        <end position="90"/>
    </location>
</feature>
<feature type="binding site" evidence="2">
    <location>
        <position position="57"/>
    </location>
    <ligand>
        <name>[4Fe-4S] cluster</name>
        <dbReference type="ChEBI" id="CHEBI:49883"/>
    </ligand>
</feature>
<feature type="binding site" evidence="2">
    <location>
        <position position="60"/>
    </location>
    <ligand>
        <name>[4Fe-4S] cluster</name>
        <dbReference type="ChEBI" id="CHEBI:49883"/>
    </ligand>
</feature>
<feature type="binding site" evidence="2">
    <location>
        <position position="69"/>
    </location>
    <ligand>
        <name>[4Fe-4S] cluster</name>
        <dbReference type="ChEBI" id="CHEBI:49883"/>
    </ligand>
</feature>
<feature type="binding site" evidence="2">
    <location>
        <position position="82"/>
    </location>
    <ligand>
        <name>[4Fe-4S] cluster</name>
        <dbReference type="ChEBI" id="CHEBI:49883"/>
    </ligand>
</feature>
<organism>
    <name type="scientific">Acidithiobacillus ferrooxidans</name>
    <name type="common">Thiobacillus ferrooxidans</name>
    <dbReference type="NCBI Taxonomy" id="920"/>
    <lineage>
        <taxon>Bacteria</taxon>
        <taxon>Pseudomonadati</taxon>
        <taxon>Pseudomonadota</taxon>
        <taxon>Acidithiobacillia</taxon>
        <taxon>Acidithiobacillales</taxon>
        <taxon>Acidithiobacillaceae</taxon>
        <taxon>Acidithiobacillus</taxon>
    </lineage>
</organism>
<accession>P50500</accession>
<reference key="1">
    <citation type="journal article" date="1992" name="J. Biol. Chem.">
        <title>Molecular cloning of the gene encoding Thiobacillus ferrooxidans Fe(II) oxidase. High homology of the gene product with HiPIP.</title>
        <authorList>
            <person name="Kusano T."/>
            <person name="Takeshima T."/>
            <person name="Sugawara K."/>
            <person name="Inoue C."/>
            <person name="Shiratori T."/>
            <person name="Yano T."/>
            <person name="Fukumori Y."/>
            <person name="Yamanaka T."/>
        </authorList>
    </citation>
    <scope>NUCLEOTIDE SEQUENCE [GENOMIC DNA]</scope>
    <scope>PROTEIN SEQUENCE OF 38-62</scope>
    <source>
        <strain>Fe1</strain>
    </source>
</reference>
<comment type="function">
    <text>Catalyzes the oxidation of Fe(2+) to Fe(3+) coupled to cytochrome c552 reduction.</text>
</comment>
<comment type="subunit">
    <text>Homomultimer.</text>
</comment>
<comment type="subcellular location">
    <subcellularLocation>
        <location evidence="2">Periplasm</location>
    </subcellularLocation>
</comment>
<comment type="PTM">
    <text>Predicted to be exported by the Tat system. The position of the signal peptide cleavage has been experimentally proven.</text>
</comment>
<comment type="similarity">
    <text evidence="2">Belongs to the high-potential iron-sulfur protein (HiPIP) family.</text>
</comment>
<gene>
    <name type="primary">iro</name>
</gene>
<dbReference type="EC" id="1.16.3.-"/>
<dbReference type="EMBL" id="X57324">
    <property type="protein sequence ID" value="CAA40594.1"/>
    <property type="molecule type" value="Genomic_DNA"/>
</dbReference>
<dbReference type="PIR" id="S23259">
    <property type="entry name" value="S23259"/>
</dbReference>
<dbReference type="RefSeq" id="WP_064219818.1">
    <property type="nucleotide sequence ID" value="NZ_LVXZ01000181.1"/>
</dbReference>
<dbReference type="SMR" id="P50500"/>
<dbReference type="OrthoDB" id="5334781at2"/>
<dbReference type="GO" id="GO:0042597">
    <property type="term" value="C:periplasmic space"/>
    <property type="evidence" value="ECO:0007669"/>
    <property type="project" value="UniProtKB-SubCell"/>
</dbReference>
<dbReference type="GO" id="GO:0051539">
    <property type="term" value="F:4 iron, 4 sulfur cluster binding"/>
    <property type="evidence" value="ECO:0007669"/>
    <property type="project" value="UniProtKB-KW"/>
</dbReference>
<dbReference type="GO" id="GO:0009055">
    <property type="term" value="F:electron transfer activity"/>
    <property type="evidence" value="ECO:0007669"/>
    <property type="project" value="InterPro"/>
</dbReference>
<dbReference type="GO" id="GO:0046872">
    <property type="term" value="F:metal ion binding"/>
    <property type="evidence" value="ECO:0007669"/>
    <property type="project" value="UniProtKB-KW"/>
</dbReference>
<dbReference type="GO" id="GO:0016491">
    <property type="term" value="F:oxidoreductase activity"/>
    <property type="evidence" value="ECO:0007669"/>
    <property type="project" value="UniProtKB-KW"/>
</dbReference>
<dbReference type="GO" id="GO:0019646">
    <property type="term" value="P:aerobic electron transport chain"/>
    <property type="evidence" value="ECO:0007669"/>
    <property type="project" value="InterPro"/>
</dbReference>
<dbReference type="Gene3D" id="4.10.490.10">
    <property type="entry name" value="High potential iron-sulphur protein"/>
    <property type="match status" value="1"/>
</dbReference>
<dbReference type="InterPro" id="IPR048112">
    <property type="entry name" value="Feoxidase_Iro"/>
</dbReference>
<dbReference type="InterPro" id="IPR000170">
    <property type="entry name" value="High_potential_FeS_prot"/>
</dbReference>
<dbReference type="InterPro" id="IPR036369">
    <property type="entry name" value="HIPIP_sf"/>
</dbReference>
<dbReference type="InterPro" id="IPR006311">
    <property type="entry name" value="TAT_signal"/>
</dbReference>
<dbReference type="InterPro" id="IPR019546">
    <property type="entry name" value="TAT_signal_bac_arc"/>
</dbReference>
<dbReference type="NCBIfam" id="NF041615">
    <property type="entry name" value="Feoxidase_Iro"/>
    <property type="match status" value="1"/>
</dbReference>
<dbReference type="NCBIfam" id="TIGR01409">
    <property type="entry name" value="TAT_signal_seq"/>
    <property type="match status" value="1"/>
</dbReference>
<dbReference type="SUPFAM" id="SSF57652">
    <property type="entry name" value="HIPIP (high potential iron protein)"/>
    <property type="match status" value="1"/>
</dbReference>
<dbReference type="PROSITE" id="PS51373">
    <property type="entry name" value="HIPIP"/>
    <property type="match status" value="1"/>
</dbReference>
<dbReference type="PROSITE" id="PS51318">
    <property type="entry name" value="TAT"/>
    <property type="match status" value="1"/>
</dbReference>
<name>IRO_ACIFR</name>
<keyword id="KW-0004">4Fe-4S</keyword>
<keyword id="KW-0903">Direct protein sequencing</keyword>
<keyword id="KW-0249">Electron transport</keyword>
<keyword id="KW-0408">Iron</keyword>
<keyword id="KW-0411">Iron-sulfur</keyword>
<keyword id="KW-0479">Metal-binding</keyword>
<keyword id="KW-0560">Oxidoreductase</keyword>
<keyword id="KW-0574">Periplasm</keyword>
<keyword id="KW-0732">Signal</keyword>
<keyword id="KW-0813">Transport</keyword>